<reference key="1">
    <citation type="journal article" date="2002" name="Nature">
        <title>Sequence and analysis of chromosome 2 of Dictyostelium discoideum.</title>
        <authorList>
            <person name="Gloeckner G."/>
            <person name="Eichinger L."/>
            <person name="Szafranski K."/>
            <person name="Pachebat J.A."/>
            <person name="Bankier A.T."/>
            <person name="Dear P.H."/>
            <person name="Lehmann R."/>
            <person name="Baumgart C."/>
            <person name="Parra G."/>
            <person name="Abril J.F."/>
            <person name="Guigo R."/>
            <person name="Kumpf K."/>
            <person name="Tunggal B."/>
            <person name="Cox E.C."/>
            <person name="Quail M.A."/>
            <person name="Platzer M."/>
            <person name="Rosenthal A."/>
            <person name="Noegel A.A."/>
        </authorList>
    </citation>
    <scope>NUCLEOTIDE SEQUENCE [LARGE SCALE GENOMIC DNA]</scope>
    <source>
        <strain>AX4</strain>
    </source>
</reference>
<reference key="2">
    <citation type="journal article" date="2005" name="Nature">
        <title>The genome of the social amoeba Dictyostelium discoideum.</title>
        <authorList>
            <person name="Eichinger L."/>
            <person name="Pachebat J.A."/>
            <person name="Gloeckner G."/>
            <person name="Rajandream M.A."/>
            <person name="Sucgang R."/>
            <person name="Berriman M."/>
            <person name="Song J."/>
            <person name="Olsen R."/>
            <person name="Szafranski K."/>
            <person name="Xu Q."/>
            <person name="Tunggal B."/>
            <person name="Kummerfeld S."/>
            <person name="Madera M."/>
            <person name="Konfortov B.A."/>
            <person name="Rivero F."/>
            <person name="Bankier A.T."/>
            <person name="Lehmann R."/>
            <person name="Hamlin N."/>
            <person name="Davies R."/>
            <person name="Gaudet P."/>
            <person name="Fey P."/>
            <person name="Pilcher K."/>
            <person name="Chen G."/>
            <person name="Saunders D."/>
            <person name="Sodergren E.J."/>
            <person name="Davis P."/>
            <person name="Kerhornou A."/>
            <person name="Nie X."/>
            <person name="Hall N."/>
            <person name="Anjard C."/>
            <person name="Hemphill L."/>
            <person name="Bason N."/>
            <person name="Farbrother P."/>
            <person name="Desany B."/>
            <person name="Just E."/>
            <person name="Morio T."/>
            <person name="Rost R."/>
            <person name="Churcher C.M."/>
            <person name="Cooper J."/>
            <person name="Haydock S."/>
            <person name="van Driessche N."/>
            <person name="Cronin A."/>
            <person name="Goodhead I."/>
            <person name="Muzny D.M."/>
            <person name="Mourier T."/>
            <person name="Pain A."/>
            <person name="Lu M."/>
            <person name="Harper D."/>
            <person name="Lindsay R."/>
            <person name="Hauser H."/>
            <person name="James K.D."/>
            <person name="Quiles M."/>
            <person name="Madan Babu M."/>
            <person name="Saito T."/>
            <person name="Buchrieser C."/>
            <person name="Wardroper A."/>
            <person name="Felder M."/>
            <person name="Thangavelu M."/>
            <person name="Johnson D."/>
            <person name="Knights A."/>
            <person name="Loulseged H."/>
            <person name="Mungall K.L."/>
            <person name="Oliver K."/>
            <person name="Price C."/>
            <person name="Quail M.A."/>
            <person name="Urushihara H."/>
            <person name="Hernandez J."/>
            <person name="Rabbinowitsch E."/>
            <person name="Steffen D."/>
            <person name="Sanders M."/>
            <person name="Ma J."/>
            <person name="Kohara Y."/>
            <person name="Sharp S."/>
            <person name="Simmonds M.N."/>
            <person name="Spiegler S."/>
            <person name="Tivey A."/>
            <person name="Sugano S."/>
            <person name="White B."/>
            <person name="Walker D."/>
            <person name="Woodward J.R."/>
            <person name="Winckler T."/>
            <person name="Tanaka Y."/>
            <person name="Shaulsky G."/>
            <person name="Schleicher M."/>
            <person name="Weinstock G.M."/>
            <person name="Rosenthal A."/>
            <person name="Cox E.C."/>
            <person name="Chisholm R.L."/>
            <person name="Gibbs R.A."/>
            <person name="Loomis W.F."/>
            <person name="Platzer M."/>
            <person name="Kay R.R."/>
            <person name="Williams J.G."/>
            <person name="Dear P.H."/>
            <person name="Noegel A.A."/>
            <person name="Barrell B.G."/>
            <person name="Kuspa A."/>
        </authorList>
    </citation>
    <scope>NUCLEOTIDE SEQUENCE [LARGE SCALE GENOMIC DNA]</scope>
    <source>
        <strain>AX4</strain>
    </source>
</reference>
<protein>
    <recommendedName>
        <fullName>COMM domain-containing protein 10</fullName>
    </recommendedName>
</protein>
<feature type="chain" id="PRO_0000327467" description="COMM domain-containing protein 10">
    <location>
        <begin position="1"/>
        <end position="211"/>
    </location>
</feature>
<feature type="domain" description="COMM" evidence="2">
    <location>
        <begin position="131"/>
        <end position="211"/>
    </location>
</feature>
<name>COMDA_DICDI</name>
<gene>
    <name type="primary">commd10</name>
    <name type="ORF">DDB_G0275249</name>
</gene>
<comment type="function">
    <text evidence="1">Scaffold protein in the commander complex that is essential for endosomal recycling of transmembrane cargos; the commander complex is composed of the CCC subcomplex and the retriever subcomplex.</text>
</comment>
<comment type="subunit">
    <text evidence="1">Component of the commander complex consisting of the CCC subcomplex and the retriever subcomplex (By similarity). Component of the CCC subcomplex (By similarity).</text>
</comment>
<comment type="similarity">
    <text evidence="3">Belongs to the COMM domain-containing protein 10 family.</text>
</comment>
<sequence length="211" mass="24783">MTDNNIFGNTKRFNDSIELINKLETPRFQKILTRVVNKIGHRNERIFTESEENILQNLFKITSLEFKGILECCSFIFEQTAYYSLSPNNLVNQLKKTMLNDDKTSCFQSVWEDNSEHVLNFLRTQSIAPLQLNEIGWRLHYQMSSSKTIKRNASAIMELNFNNNNNNNNNNNNNNNNNINNDKMILEFNKEQLLEFYNKLESIQEKLDTLA</sequence>
<accession>Q554G3</accession>
<accession>Q8ST26</accession>
<evidence type="ECO:0000250" key="1">
    <source>
        <dbReference type="UniProtKB" id="Q9Y6G5"/>
    </source>
</evidence>
<evidence type="ECO:0000255" key="2">
    <source>
        <dbReference type="PROSITE-ProRule" id="PRU00602"/>
    </source>
</evidence>
<evidence type="ECO:0000305" key="3"/>
<dbReference type="EMBL" id="AAFI02000013">
    <property type="protein sequence ID" value="EAL69905.2"/>
    <property type="molecule type" value="Genomic_DNA"/>
</dbReference>
<dbReference type="RefSeq" id="XP_643748.2">
    <property type="nucleotide sequence ID" value="XM_638656.2"/>
</dbReference>
<dbReference type="SMR" id="Q554G3"/>
<dbReference type="FunCoup" id="Q554G3">
    <property type="interactions" value="23"/>
</dbReference>
<dbReference type="STRING" id="44689.Q554G3"/>
<dbReference type="PaxDb" id="44689-DDB0266461"/>
<dbReference type="EnsemblProtists" id="EAL69905">
    <property type="protein sequence ID" value="EAL69905"/>
    <property type="gene ID" value="DDB_G0275249"/>
</dbReference>
<dbReference type="GeneID" id="8619792"/>
<dbReference type="KEGG" id="ddi:DDB_G0275249"/>
<dbReference type="dictyBase" id="DDB_G0275249">
    <property type="gene designation" value="commd10"/>
</dbReference>
<dbReference type="VEuPathDB" id="AmoebaDB:DDB_G0275249"/>
<dbReference type="eggNOG" id="ENOG502QWQ2">
    <property type="taxonomic scope" value="Eukaryota"/>
</dbReference>
<dbReference type="HOGENOM" id="CLU_091039_1_0_1"/>
<dbReference type="InParanoid" id="Q554G3"/>
<dbReference type="OMA" id="FVEFNHK"/>
<dbReference type="PhylomeDB" id="Q554G3"/>
<dbReference type="Reactome" id="R-DDI-8951664">
    <property type="pathway name" value="Neddylation"/>
</dbReference>
<dbReference type="PRO" id="PR:Q554G3"/>
<dbReference type="Proteomes" id="UP000002195">
    <property type="component" value="Chromosome 2"/>
</dbReference>
<dbReference type="CDD" id="cd04758">
    <property type="entry name" value="Commd10"/>
    <property type="match status" value="1"/>
</dbReference>
<dbReference type="InterPro" id="IPR017920">
    <property type="entry name" value="COMM"/>
</dbReference>
<dbReference type="InterPro" id="IPR037361">
    <property type="entry name" value="COMMD10"/>
</dbReference>
<dbReference type="PANTHER" id="PTHR12333">
    <property type="entry name" value="COMM DOMAIN CONTAINING PROTEIN 10"/>
    <property type="match status" value="1"/>
</dbReference>
<dbReference type="PANTHER" id="PTHR12333:SF0">
    <property type="entry name" value="COMM DOMAIN-CONTAINING PROTEIN 10"/>
    <property type="match status" value="1"/>
</dbReference>
<dbReference type="Pfam" id="PF07258">
    <property type="entry name" value="COMM_domain"/>
    <property type="match status" value="1"/>
</dbReference>
<dbReference type="Pfam" id="PF21672">
    <property type="entry name" value="COMM_HN"/>
    <property type="match status" value="1"/>
</dbReference>
<dbReference type="PROSITE" id="PS51269">
    <property type="entry name" value="COMM"/>
    <property type="match status" value="1"/>
</dbReference>
<proteinExistence type="inferred from homology"/>
<keyword id="KW-1185">Reference proteome</keyword>
<organism>
    <name type="scientific">Dictyostelium discoideum</name>
    <name type="common">Social amoeba</name>
    <dbReference type="NCBI Taxonomy" id="44689"/>
    <lineage>
        <taxon>Eukaryota</taxon>
        <taxon>Amoebozoa</taxon>
        <taxon>Evosea</taxon>
        <taxon>Eumycetozoa</taxon>
        <taxon>Dictyostelia</taxon>
        <taxon>Dictyosteliales</taxon>
        <taxon>Dictyosteliaceae</taxon>
        <taxon>Dictyostelium</taxon>
    </lineage>
</organism>